<gene>
    <name evidence="1" type="primary">accA</name>
    <name type="ordered locus">SZO_15640</name>
</gene>
<evidence type="ECO:0000255" key="1">
    <source>
        <dbReference type="HAMAP-Rule" id="MF_00823"/>
    </source>
</evidence>
<evidence type="ECO:0000255" key="2">
    <source>
        <dbReference type="PROSITE-ProRule" id="PRU01137"/>
    </source>
</evidence>
<reference key="1">
    <citation type="journal article" date="2009" name="PLoS Pathog.">
        <title>Genomic evidence for the evolution of Streptococcus equi: host restriction, increased virulence, and genetic exchange with human pathogens.</title>
        <authorList>
            <person name="Holden M.T.G."/>
            <person name="Heather Z."/>
            <person name="Paillot R."/>
            <person name="Steward K.F."/>
            <person name="Webb K."/>
            <person name="Ainslie F."/>
            <person name="Jourdan T."/>
            <person name="Bason N.C."/>
            <person name="Holroyd N.E."/>
            <person name="Mungall K."/>
            <person name="Quail M.A."/>
            <person name="Sanders M."/>
            <person name="Simmonds M."/>
            <person name="Willey D."/>
            <person name="Brooks K."/>
            <person name="Aanensen D.M."/>
            <person name="Spratt B.G."/>
            <person name="Jolley K.A."/>
            <person name="Maiden M.C.J."/>
            <person name="Kehoe M."/>
            <person name="Chanter N."/>
            <person name="Bentley S.D."/>
            <person name="Robinson C."/>
            <person name="Maskell D.J."/>
            <person name="Parkhill J."/>
            <person name="Waller A.S."/>
        </authorList>
    </citation>
    <scope>NUCLEOTIDE SEQUENCE [LARGE SCALE GENOMIC DNA]</scope>
    <source>
        <strain>H70</strain>
    </source>
</reference>
<name>ACCA_STRS7</name>
<organism>
    <name type="scientific">Streptococcus equi subsp. zooepidemicus (strain H70)</name>
    <dbReference type="NCBI Taxonomy" id="553483"/>
    <lineage>
        <taxon>Bacteria</taxon>
        <taxon>Bacillati</taxon>
        <taxon>Bacillota</taxon>
        <taxon>Bacilli</taxon>
        <taxon>Lactobacillales</taxon>
        <taxon>Streptococcaceae</taxon>
        <taxon>Streptococcus</taxon>
    </lineage>
</organism>
<feature type="chain" id="PRO_1000213131" description="Acetyl-coenzyme A carboxylase carboxyl transferase subunit alpha">
    <location>
        <begin position="1"/>
        <end position="256"/>
    </location>
</feature>
<feature type="domain" description="CoA carboxyltransferase C-terminal" evidence="2">
    <location>
        <begin position="1"/>
        <end position="236"/>
    </location>
</feature>
<dbReference type="EC" id="2.1.3.15" evidence="1"/>
<dbReference type="EMBL" id="FM204884">
    <property type="protein sequence ID" value="CAX00266.1"/>
    <property type="molecule type" value="Genomic_DNA"/>
</dbReference>
<dbReference type="SMR" id="C0ME08"/>
<dbReference type="KEGG" id="seq:SZO_15640"/>
<dbReference type="eggNOG" id="COG0825">
    <property type="taxonomic scope" value="Bacteria"/>
</dbReference>
<dbReference type="HOGENOM" id="CLU_015486_0_2_9"/>
<dbReference type="UniPathway" id="UPA00655">
    <property type="reaction ID" value="UER00711"/>
</dbReference>
<dbReference type="Proteomes" id="UP000001368">
    <property type="component" value="Chromosome"/>
</dbReference>
<dbReference type="GO" id="GO:0009317">
    <property type="term" value="C:acetyl-CoA carboxylase complex"/>
    <property type="evidence" value="ECO:0007669"/>
    <property type="project" value="InterPro"/>
</dbReference>
<dbReference type="GO" id="GO:0003989">
    <property type="term" value="F:acetyl-CoA carboxylase activity"/>
    <property type="evidence" value="ECO:0007669"/>
    <property type="project" value="InterPro"/>
</dbReference>
<dbReference type="GO" id="GO:0005524">
    <property type="term" value="F:ATP binding"/>
    <property type="evidence" value="ECO:0007669"/>
    <property type="project" value="UniProtKB-KW"/>
</dbReference>
<dbReference type="GO" id="GO:0016743">
    <property type="term" value="F:carboxyl- or carbamoyltransferase activity"/>
    <property type="evidence" value="ECO:0007669"/>
    <property type="project" value="UniProtKB-UniRule"/>
</dbReference>
<dbReference type="GO" id="GO:0006633">
    <property type="term" value="P:fatty acid biosynthetic process"/>
    <property type="evidence" value="ECO:0007669"/>
    <property type="project" value="UniProtKB-KW"/>
</dbReference>
<dbReference type="GO" id="GO:2001295">
    <property type="term" value="P:malonyl-CoA biosynthetic process"/>
    <property type="evidence" value="ECO:0007669"/>
    <property type="project" value="UniProtKB-UniRule"/>
</dbReference>
<dbReference type="Gene3D" id="3.90.226.10">
    <property type="entry name" value="2-enoyl-CoA Hydratase, Chain A, domain 1"/>
    <property type="match status" value="1"/>
</dbReference>
<dbReference type="HAMAP" id="MF_00823">
    <property type="entry name" value="AcetylCoA_CT_alpha"/>
    <property type="match status" value="1"/>
</dbReference>
<dbReference type="InterPro" id="IPR001095">
    <property type="entry name" value="Acetyl_CoA_COase_a_su"/>
</dbReference>
<dbReference type="InterPro" id="IPR029045">
    <property type="entry name" value="ClpP/crotonase-like_dom_sf"/>
</dbReference>
<dbReference type="InterPro" id="IPR011763">
    <property type="entry name" value="COA_CT_C"/>
</dbReference>
<dbReference type="NCBIfam" id="TIGR00513">
    <property type="entry name" value="accA"/>
    <property type="match status" value="1"/>
</dbReference>
<dbReference type="NCBIfam" id="NF041504">
    <property type="entry name" value="AccA_sub"/>
    <property type="match status" value="1"/>
</dbReference>
<dbReference type="NCBIfam" id="NF004344">
    <property type="entry name" value="PRK05724.1"/>
    <property type="match status" value="1"/>
</dbReference>
<dbReference type="NCBIfam" id="NF008971">
    <property type="entry name" value="PRK12319.1"/>
    <property type="match status" value="1"/>
</dbReference>
<dbReference type="PANTHER" id="PTHR42853">
    <property type="entry name" value="ACETYL-COENZYME A CARBOXYLASE CARBOXYL TRANSFERASE SUBUNIT ALPHA"/>
    <property type="match status" value="1"/>
</dbReference>
<dbReference type="PANTHER" id="PTHR42853:SF3">
    <property type="entry name" value="ACETYL-COENZYME A CARBOXYLASE CARBOXYL TRANSFERASE SUBUNIT ALPHA, CHLOROPLASTIC"/>
    <property type="match status" value="1"/>
</dbReference>
<dbReference type="Pfam" id="PF03255">
    <property type="entry name" value="ACCA"/>
    <property type="match status" value="1"/>
</dbReference>
<dbReference type="PRINTS" id="PR01069">
    <property type="entry name" value="ACCCTRFRASEA"/>
</dbReference>
<dbReference type="SUPFAM" id="SSF52096">
    <property type="entry name" value="ClpP/crotonase"/>
    <property type="match status" value="1"/>
</dbReference>
<dbReference type="PROSITE" id="PS50989">
    <property type="entry name" value="COA_CT_CTER"/>
    <property type="match status" value="1"/>
</dbReference>
<protein>
    <recommendedName>
        <fullName evidence="1">Acetyl-coenzyme A carboxylase carboxyl transferase subunit alpha</fullName>
        <shortName evidence="1">ACCase subunit alpha</shortName>
        <shortName evidence="1">Acetyl-CoA carboxylase carboxyltransferase subunit alpha</shortName>
        <ecNumber evidence="1">2.1.3.15</ecNumber>
    </recommendedName>
</protein>
<keyword id="KW-0067">ATP-binding</keyword>
<keyword id="KW-0963">Cytoplasm</keyword>
<keyword id="KW-0275">Fatty acid biosynthesis</keyword>
<keyword id="KW-0276">Fatty acid metabolism</keyword>
<keyword id="KW-0444">Lipid biosynthesis</keyword>
<keyword id="KW-0443">Lipid metabolism</keyword>
<keyword id="KW-0547">Nucleotide-binding</keyword>
<keyword id="KW-0808">Transferase</keyword>
<comment type="function">
    <text evidence="1">Component of the acetyl coenzyme A carboxylase (ACC) complex. First, biotin carboxylase catalyzes the carboxylation of biotin on its carrier protein (BCCP) and then the CO(2) group is transferred by the carboxyltransferase to acetyl-CoA to form malonyl-CoA.</text>
</comment>
<comment type="catalytic activity">
    <reaction evidence="1">
        <text>N(6)-carboxybiotinyl-L-lysyl-[protein] + acetyl-CoA = N(6)-biotinyl-L-lysyl-[protein] + malonyl-CoA</text>
        <dbReference type="Rhea" id="RHEA:54728"/>
        <dbReference type="Rhea" id="RHEA-COMP:10505"/>
        <dbReference type="Rhea" id="RHEA-COMP:10506"/>
        <dbReference type="ChEBI" id="CHEBI:57288"/>
        <dbReference type="ChEBI" id="CHEBI:57384"/>
        <dbReference type="ChEBI" id="CHEBI:83144"/>
        <dbReference type="ChEBI" id="CHEBI:83145"/>
        <dbReference type="EC" id="2.1.3.15"/>
    </reaction>
</comment>
<comment type="pathway">
    <text evidence="1">Lipid metabolism; malonyl-CoA biosynthesis; malonyl-CoA from acetyl-CoA: step 1/1.</text>
</comment>
<comment type="subunit">
    <text evidence="1">Acetyl-CoA carboxylase is a heterohexamer composed of biotin carboxyl carrier protein (AccB), biotin carboxylase (AccC) and two subunits each of ACCase subunit alpha (AccA) and ACCase subunit beta (AccD).</text>
</comment>
<comment type="subcellular location">
    <subcellularLocation>
        <location evidence="1">Cytoplasm</location>
    </subcellularLocation>
</comment>
<comment type="similarity">
    <text evidence="1">Belongs to the AccA family.</text>
</comment>
<proteinExistence type="inferred from homology"/>
<sequence>MTDVARILKEARDQGRMTALDYASLIFDEFMELHGDRQFADDGSIVGGIAYLADQPVTVIGIQKGKNLQDNLARNFGQPHPEGYRKALRLMKQAEKFGRPVITFINTAGAYPGVGAEERGQGEAIARNLMEMSDLKVPIIAIIIGEGGSGGALALAVADQVWMLENTMYAVLSPEGFASILWKDGSRATEAAELMKITAAELYQMGVIDRIIPERGYFSSEIVEMIKLHLIDEITQLQAKPLEELLDQRYQRFRKY</sequence>
<accession>C0ME08</accession>